<reference key="1">
    <citation type="journal article" date="2003" name="Nat. Genet.">
        <title>Comparative analysis of the genome sequences of Bordetella pertussis, Bordetella parapertussis and Bordetella bronchiseptica.</title>
        <authorList>
            <person name="Parkhill J."/>
            <person name="Sebaihia M."/>
            <person name="Preston A."/>
            <person name="Murphy L.D."/>
            <person name="Thomson N.R."/>
            <person name="Harris D.E."/>
            <person name="Holden M.T.G."/>
            <person name="Churcher C.M."/>
            <person name="Bentley S.D."/>
            <person name="Mungall K.L."/>
            <person name="Cerdeno-Tarraga A.-M."/>
            <person name="Temple L."/>
            <person name="James K.D."/>
            <person name="Harris B."/>
            <person name="Quail M.A."/>
            <person name="Achtman M."/>
            <person name="Atkin R."/>
            <person name="Baker S."/>
            <person name="Basham D."/>
            <person name="Bason N."/>
            <person name="Cherevach I."/>
            <person name="Chillingworth T."/>
            <person name="Collins M."/>
            <person name="Cronin A."/>
            <person name="Davis P."/>
            <person name="Doggett J."/>
            <person name="Feltwell T."/>
            <person name="Goble A."/>
            <person name="Hamlin N."/>
            <person name="Hauser H."/>
            <person name="Holroyd S."/>
            <person name="Jagels K."/>
            <person name="Leather S."/>
            <person name="Moule S."/>
            <person name="Norberczak H."/>
            <person name="O'Neil S."/>
            <person name="Ormond D."/>
            <person name="Price C."/>
            <person name="Rabbinowitsch E."/>
            <person name="Rutter S."/>
            <person name="Sanders M."/>
            <person name="Saunders D."/>
            <person name="Seeger K."/>
            <person name="Sharp S."/>
            <person name="Simmonds M."/>
            <person name="Skelton J."/>
            <person name="Squares R."/>
            <person name="Squares S."/>
            <person name="Stevens K."/>
            <person name="Unwin L."/>
            <person name="Whitehead S."/>
            <person name="Barrell B.G."/>
            <person name="Maskell D.J."/>
        </authorList>
    </citation>
    <scope>NUCLEOTIDE SEQUENCE [LARGE SCALE GENOMIC DNA]</scope>
    <source>
        <strain>12822 / ATCC BAA-587 / NCTC 13253</strain>
    </source>
</reference>
<keyword id="KW-0963">Cytoplasm</keyword>
<keyword id="KW-0489">Methyltransferase</keyword>
<keyword id="KW-0698">rRNA processing</keyword>
<keyword id="KW-0949">S-adenosyl-L-methionine</keyword>
<keyword id="KW-0808">Transferase</keyword>
<sequence length="364" mass="38866">MEFEHRPVLLEPTVDALVLPDFGGKGAHRQAGEPGPDAATRLQHGVFVDGTFGRGGHSRALLARLGAQARLVVFDKDPQAIAVARELAAGDGRVEVVHGGFATMAEELTARGIEQVDGVMLDLGVSSPQIDDAERGFSFMRDGPLDMRMDTTRGPTVADWLAQASVDEMREVIADYGEERFAFQVAKAIAACRATRPLHTTLQLAECVAGAVRTREKGQHPATRTFQALRIYINRELEELARALASALDLLGPGGRLAVISFHSLEDRMVKQCIAAAARPAAAHARLPLRESELPQPLVRSLGKVVADDVEVAGNARARSAILRVAERTGEPLPPGGGAGFVKAGRVPGEPVRGTRAGSKGRRR</sequence>
<evidence type="ECO:0000255" key="1">
    <source>
        <dbReference type="HAMAP-Rule" id="MF_01007"/>
    </source>
</evidence>
<evidence type="ECO:0000256" key="2">
    <source>
        <dbReference type="SAM" id="MobiDB-lite"/>
    </source>
</evidence>
<organism>
    <name type="scientific">Bordetella parapertussis (strain 12822 / ATCC BAA-587 / NCTC 13253)</name>
    <dbReference type="NCBI Taxonomy" id="257311"/>
    <lineage>
        <taxon>Bacteria</taxon>
        <taxon>Pseudomonadati</taxon>
        <taxon>Pseudomonadota</taxon>
        <taxon>Betaproteobacteria</taxon>
        <taxon>Burkholderiales</taxon>
        <taxon>Alcaligenaceae</taxon>
        <taxon>Bordetella</taxon>
    </lineage>
</organism>
<name>RSMH_BORPA</name>
<feature type="chain" id="PRO_0000108587" description="Ribosomal RNA small subunit methyltransferase H">
    <location>
        <begin position="1"/>
        <end position="364"/>
    </location>
</feature>
<feature type="region of interest" description="Disordered" evidence="2">
    <location>
        <begin position="333"/>
        <end position="364"/>
    </location>
</feature>
<feature type="binding site" evidence="1">
    <location>
        <begin position="55"/>
        <end position="57"/>
    </location>
    <ligand>
        <name>S-adenosyl-L-methionine</name>
        <dbReference type="ChEBI" id="CHEBI:59789"/>
    </ligand>
</feature>
<feature type="binding site" evidence="1">
    <location>
        <position position="75"/>
    </location>
    <ligand>
        <name>S-adenosyl-L-methionine</name>
        <dbReference type="ChEBI" id="CHEBI:59789"/>
    </ligand>
</feature>
<feature type="binding site" evidence="1">
    <location>
        <position position="101"/>
    </location>
    <ligand>
        <name>S-adenosyl-L-methionine</name>
        <dbReference type="ChEBI" id="CHEBI:59789"/>
    </ligand>
</feature>
<feature type="binding site" evidence="1">
    <location>
        <position position="122"/>
    </location>
    <ligand>
        <name>S-adenosyl-L-methionine</name>
        <dbReference type="ChEBI" id="CHEBI:59789"/>
    </ligand>
</feature>
<feature type="binding site" evidence="1">
    <location>
        <position position="129"/>
    </location>
    <ligand>
        <name>S-adenosyl-L-methionine</name>
        <dbReference type="ChEBI" id="CHEBI:59789"/>
    </ligand>
</feature>
<comment type="function">
    <text evidence="1">Specifically methylates the N4 position of cytidine in position 1402 (C1402) of 16S rRNA.</text>
</comment>
<comment type="catalytic activity">
    <reaction evidence="1">
        <text>cytidine(1402) in 16S rRNA + S-adenosyl-L-methionine = N(4)-methylcytidine(1402) in 16S rRNA + S-adenosyl-L-homocysteine + H(+)</text>
        <dbReference type="Rhea" id="RHEA:42928"/>
        <dbReference type="Rhea" id="RHEA-COMP:10286"/>
        <dbReference type="Rhea" id="RHEA-COMP:10287"/>
        <dbReference type="ChEBI" id="CHEBI:15378"/>
        <dbReference type="ChEBI" id="CHEBI:57856"/>
        <dbReference type="ChEBI" id="CHEBI:59789"/>
        <dbReference type="ChEBI" id="CHEBI:74506"/>
        <dbReference type="ChEBI" id="CHEBI:82748"/>
        <dbReference type="EC" id="2.1.1.199"/>
    </reaction>
</comment>
<comment type="subcellular location">
    <subcellularLocation>
        <location evidence="1">Cytoplasm</location>
    </subcellularLocation>
</comment>
<comment type="similarity">
    <text evidence="1">Belongs to the methyltransferase superfamily. RsmH family.</text>
</comment>
<protein>
    <recommendedName>
        <fullName evidence="1">Ribosomal RNA small subunit methyltransferase H</fullName>
        <ecNumber evidence="1">2.1.1.199</ecNumber>
    </recommendedName>
    <alternativeName>
        <fullName evidence="1">16S rRNA m(4)C1402 methyltransferase</fullName>
    </alternativeName>
    <alternativeName>
        <fullName evidence="1">rRNA (cytosine-N(4)-)-methyltransferase RsmH</fullName>
    </alternativeName>
</protein>
<dbReference type="EC" id="2.1.1.199" evidence="1"/>
<dbReference type="EMBL" id="BX640434">
    <property type="protein sequence ID" value="CAE39042.1"/>
    <property type="molecule type" value="Genomic_DNA"/>
</dbReference>
<dbReference type="RefSeq" id="WP_003814582.1">
    <property type="nucleotide sequence ID" value="NC_002928.3"/>
</dbReference>
<dbReference type="SMR" id="Q7W4A7"/>
<dbReference type="GeneID" id="93205548"/>
<dbReference type="KEGG" id="bpa:BPP3759"/>
<dbReference type="HOGENOM" id="CLU_038422_2_0_4"/>
<dbReference type="Proteomes" id="UP000001421">
    <property type="component" value="Chromosome"/>
</dbReference>
<dbReference type="GO" id="GO:0005737">
    <property type="term" value="C:cytoplasm"/>
    <property type="evidence" value="ECO:0007669"/>
    <property type="project" value="UniProtKB-SubCell"/>
</dbReference>
<dbReference type="GO" id="GO:0071424">
    <property type="term" value="F:rRNA (cytosine-N4-)-methyltransferase activity"/>
    <property type="evidence" value="ECO:0007669"/>
    <property type="project" value="UniProtKB-UniRule"/>
</dbReference>
<dbReference type="GO" id="GO:0070475">
    <property type="term" value="P:rRNA base methylation"/>
    <property type="evidence" value="ECO:0007669"/>
    <property type="project" value="UniProtKB-UniRule"/>
</dbReference>
<dbReference type="CDD" id="cd02440">
    <property type="entry name" value="AdoMet_MTases"/>
    <property type="match status" value="1"/>
</dbReference>
<dbReference type="Gene3D" id="1.10.150.170">
    <property type="entry name" value="Putative methyltransferase TM0872, insert domain"/>
    <property type="match status" value="1"/>
</dbReference>
<dbReference type="Gene3D" id="3.40.50.150">
    <property type="entry name" value="Vaccinia Virus protein VP39"/>
    <property type="match status" value="1"/>
</dbReference>
<dbReference type="HAMAP" id="MF_01007">
    <property type="entry name" value="16SrRNA_methyltr_H"/>
    <property type="match status" value="1"/>
</dbReference>
<dbReference type="InterPro" id="IPR002903">
    <property type="entry name" value="RsmH"/>
</dbReference>
<dbReference type="InterPro" id="IPR023397">
    <property type="entry name" value="SAM-dep_MeTrfase_MraW_recog"/>
</dbReference>
<dbReference type="InterPro" id="IPR029063">
    <property type="entry name" value="SAM-dependent_MTases_sf"/>
</dbReference>
<dbReference type="NCBIfam" id="TIGR00006">
    <property type="entry name" value="16S rRNA (cytosine(1402)-N(4))-methyltransferase RsmH"/>
    <property type="match status" value="1"/>
</dbReference>
<dbReference type="PANTHER" id="PTHR11265:SF0">
    <property type="entry name" value="12S RRNA N4-METHYLCYTIDINE METHYLTRANSFERASE"/>
    <property type="match status" value="1"/>
</dbReference>
<dbReference type="PANTHER" id="PTHR11265">
    <property type="entry name" value="S-ADENOSYL-METHYLTRANSFERASE MRAW"/>
    <property type="match status" value="1"/>
</dbReference>
<dbReference type="Pfam" id="PF01795">
    <property type="entry name" value="Methyltransf_5"/>
    <property type="match status" value="1"/>
</dbReference>
<dbReference type="PIRSF" id="PIRSF004486">
    <property type="entry name" value="MraW"/>
    <property type="match status" value="1"/>
</dbReference>
<dbReference type="SUPFAM" id="SSF81799">
    <property type="entry name" value="Putative methyltransferase TM0872, insert domain"/>
    <property type="match status" value="1"/>
</dbReference>
<dbReference type="SUPFAM" id="SSF53335">
    <property type="entry name" value="S-adenosyl-L-methionine-dependent methyltransferases"/>
    <property type="match status" value="1"/>
</dbReference>
<proteinExistence type="inferred from homology"/>
<gene>
    <name evidence="1" type="primary">rsmH</name>
    <name type="synonym">mraW</name>
    <name type="ordered locus">BPP3759</name>
</gene>
<accession>Q7W4A7</accession>